<keyword id="KW-0028">Amino-acid biosynthesis</keyword>
<keyword id="KW-0100">Branched-chain amino acid biosynthesis</keyword>
<keyword id="KW-0432">Leucine biosynthesis</keyword>
<keyword id="KW-0456">Lyase</keyword>
<keyword id="KW-1185">Reference proteome</keyword>
<feature type="chain" id="PRO_1000063804" description="3-isopropylmalate dehydratase small subunit">
    <location>
        <begin position="1"/>
        <end position="216"/>
    </location>
</feature>
<comment type="function">
    <text evidence="1">Catalyzes the isomerization between 2-isopropylmalate and 3-isopropylmalate, via the formation of 2-isopropylmaleate.</text>
</comment>
<comment type="catalytic activity">
    <reaction evidence="1">
        <text>(2R,3S)-3-isopropylmalate = (2S)-2-isopropylmalate</text>
        <dbReference type="Rhea" id="RHEA:32287"/>
        <dbReference type="ChEBI" id="CHEBI:1178"/>
        <dbReference type="ChEBI" id="CHEBI:35121"/>
        <dbReference type="EC" id="4.2.1.33"/>
    </reaction>
</comment>
<comment type="pathway">
    <text evidence="1">Amino-acid biosynthesis; L-leucine biosynthesis; L-leucine from 3-methyl-2-oxobutanoate: step 2/4.</text>
</comment>
<comment type="subunit">
    <text evidence="1">Heterodimer of LeuC and LeuD.</text>
</comment>
<comment type="similarity">
    <text evidence="1">Belongs to the LeuD family. LeuD type 1 subfamily.</text>
</comment>
<proteinExistence type="inferred from homology"/>
<sequence>MQKFTVHKGLVAPMDRENVDTDAIIPKQFLKSIRKTGFGPNLFDAWRYLDAGFPGQDPASRKPNPDFVLNQPRYAGASILLARKNFGCGSSREHAPWALDQYGFRAIIAPSYADIFFNNSFKNGLLPIVLPEAQIAQLFDEVNAFPGYTLTIDLERQVIVKPQGKELPFEVQAFRKYCLLNGFDDIGLTLRQSDKIKAFEAERLAKKPWLNHTIPG</sequence>
<protein>
    <recommendedName>
        <fullName evidence="1">3-isopropylmalate dehydratase small subunit</fullName>
        <ecNumber evidence="1">4.2.1.33</ecNumber>
    </recommendedName>
    <alternativeName>
        <fullName evidence="1">Alpha-IPM isomerase</fullName>
        <shortName evidence="1">IPMI</shortName>
    </alternativeName>
    <alternativeName>
        <fullName evidence="1">Isopropylmalate isomerase</fullName>
    </alternativeName>
</protein>
<reference key="1">
    <citation type="journal article" date="2008" name="Appl. Environ. Microbiol.">
        <title>The genome of Polaromonas sp. strain JS666: insights into the evolution of a hydrocarbon- and xenobiotic-degrading bacterium, and features of relevance to biotechnology.</title>
        <authorList>
            <person name="Mattes T.E."/>
            <person name="Alexander A.K."/>
            <person name="Richardson P.M."/>
            <person name="Munk A.C."/>
            <person name="Han C.S."/>
            <person name="Stothard P."/>
            <person name="Coleman N.V."/>
        </authorList>
    </citation>
    <scope>NUCLEOTIDE SEQUENCE [LARGE SCALE GENOMIC DNA]</scope>
    <source>
        <strain>JS666 / ATCC BAA-500</strain>
    </source>
</reference>
<accession>Q126M8</accession>
<evidence type="ECO:0000255" key="1">
    <source>
        <dbReference type="HAMAP-Rule" id="MF_01031"/>
    </source>
</evidence>
<name>LEUD_POLSJ</name>
<gene>
    <name evidence="1" type="primary">leuD</name>
    <name type="ordered locus">Bpro_3609</name>
</gene>
<organism>
    <name type="scientific">Polaromonas sp. (strain JS666 / ATCC BAA-500)</name>
    <dbReference type="NCBI Taxonomy" id="296591"/>
    <lineage>
        <taxon>Bacteria</taxon>
        <taxon>Pseudomonadati</taxon>
        <taxon>Pseudomonadota</taxon>
        <taxon>Betaproteobacteria</taxon>
        <taxon>Burkholderiales</taxon>
        <taxon>Comamonadaceae</taxon>
        <taxon>Polaromonas</taxon>
    </lineage>
</organism>
<dbReference type="EC" id="4.2.1.33" evidence="1"/>
<dbReference type="EMBL" id="CP000316">
    <property type="protein sequence ID" value="ABE45514.1"/>
    <property type="molecule type" value="Genomic_DNA"/>
</dbReference>
<dbReference type="RefSeq" id="WP_011484508.1">
    <property type="nucleotide sequence ID" value="NC_007948.1"/>
</dbReference>
<dbReference type="SMR" id="Q126M8"/>
<dbReference type="STRING" id="296591.Bpro_3609"/>
<dbReference type="KEGG" id="pol:Bpro_3609"/>
<dbReference type="eggNOG" id="COG0066">
    <property type="taxonomic scope" value="Bacteria"/>
</dbReference>
<dbReference type="HOGENOM" id="CLU_081378_0_3_4"/>
<dbReference type="OrthoDB" id="9777465at2"/>
<dbReference type="UniPathway" id="UPA00048">
    <property type="reaction ID" value="UER00071"/>
</dbReference>
<dbReference type="Proteomes" id="UP000001983">
    <property type="component" value="Chromosome"/>
</dbReference>
<dbReference type="GO" id="GO:0009316">
    <property type="term" value="C:3-isopropylmalate dehydratase complex"/>
    <property type="evidence" value="ECO:0007669"/>
    <property type="project" value="InterPro"/>
</dbReference>
<dbReference type="GO" id="GO:0003861">
    <property type="term" value="F:3-isopropylmalate dehydratase activity"/>
    <property type="evidence" value="ECO:0007669"/>
    <property type="project" value="UniProtKB-UniRule"/>
</dbReference>
<dbReference type="GO" id="GO:0009098">
    <property type="term" value="P:L-leucine biosynthetic process"/>
    <property type="evidence" value="ECO:0007669"/>
    <property type="project" value="UniProtKB-UniRule"/>
</dbReference>
<dbReference type="CDD" id="cd01577">
    <property type="entry name" value="IPMI_Swivel"/>
    <property type="match status" value="1"/>
</dbReference>
<dbReference type="FunFam" id="3.20.19.10:FF:000003">
    <property type="entry name" value="3-isopropylmalate dehydratase small subunit"/>
    <property type="match status" value="1"/>
</dbReference>
<dbReference type="Gene3D" id="3.20.19.10">
    <property type="entry name" value="Aconitase, domain 4"/>
    <property type="match status" value="1"/>
</dbReference>
<dbReference type="HAMAP" id="MF_01031">
    <property type="entry name" value="LeuD_type1"/>
    <property type="match status" value="1"/>
</dbReference>
<dbReference type="InterPro" id="IPR004431">
    <property type="entry name" value="3-IsopropMal_deHydase_ssu"/>
</dbReference>
<dbReference type="InterPro" id="IPR015928">
    <property type="entry name" value="Aconitase/3IPM_dehydase_swvl"/>
</dbReference>
<dbReference type="InterPro" id="IPR000573">
    <property type="entry name" value="AconitaseA/IPMdHydase_ssu_swvl"/>
</dbReference>
<dbReference type="InterPro" id="IPR033940">
    <property type="entry name" value="IPMI_Swivel"/>
</dbReference>
<dbReference type="InterPro" id="IPR050075">
    <property type="entry name" value="LeuD"/>
</dbReference>
<dbReference type="NCBIfam" id="TIGR00171">
    <property type="entry name" value="leuD"/>
    <property type="match status" value="1"/>
</dbReference>
<dbReference type="NCBIfam" id="NF002458">
    <property type="entry name" value="PRK01641.1"/>
    <property type="match status" value="1"/>
</dbReference>
<dbReference type="PANTHER" id="PTHR43345:SF5">
    <property type="entry name" value="3-ISOPROPYLMALATE DEHYDRATASE SMALL SUBUNIT"/>
    <property type="match status" value="1"/>
</dbReference>
<dbReference type="PANTHER" id="PTHR43345">
    <property type="entry name" value="3-ISOPROPYLMALATE DEHYDRATASE SMALL SUBUNIT 2-RELATED-RELATED"/>
    <property type="match status" value="1"/>
</dbReference>
<dbReference type="Pfam" id="PF00694">
    <property type="entry name" value="Aconitase_C"/>
    <property type="match status" value="1"/>
</dbReference>
<dbReference type="SUPFAM" id="SSF52016">
    <property type="entry name" value="LeuD/IlvD-like"/>
    <property type="match status" value="1"/>
</dbReference>